<feature type="chain" id="PRO_0000248372" description="Very-long-chain 3-oxoacyl-CoA reductase-B">
    <location>
        <begin position="1"/>
        <end position="311"/>
    </location>
</feature>
<feature type="transmembrane region" description="Helical" evidence="3">
    <location>
        <begin position="8"/>
        <end position="28"/>
    </location>
</feature>
<feature type="transmembrane region" description="Helical" evidence="3">
    <location>
        <begin position="125"/>
        <end position="145"/>
    </location>
</feature>
<feature type="transmembrane region" description="Helical" evidence="3">
    <location>
        <begin position="269"/>
        <end position="289"/>
    </location>
</feature>
<feature type="active site" description="Proton acceptor" evidence="1">
    <location>
        <position position="200"/>
    </location>
</feature>
<feature type="binding site" evidence="1">
    <location>
        <begin position="48"/>
        <end position="77"/>
    </location>
    <ligand>
        <name>NADP(+)</name>
        <dbReference type="ChEBI" id="CHEBI:58349"/>
    </ligand>
</feature>
<feature type="binding site" evidence="1">
    <location>
        <position position="187"/>
    </location>
    <ligand>
        <name>substrate</name>
    </ligand>
</feature>
<feature type="sequence conflict" description="In Ref. 1; AAS58450." evidence="5" ref="1">
    <original>E</original>
    <variation>D</variation>
    <location>
        <position position="2"/>
    </location>
</feature>
<evidence type="ECO:0000250" key="1"/>
<evidence type="ECO:0000250" key="2">
    <source>
        <dbReference type="UniProtKB" id="Q53GQ0"/>
    </source>
</evidence>
<evidence type="ECO:0000255" key="3"/>
<evidence type="ECO:0000269" key="4">
    <source>
    </source>
</evidence>
<evidence type="ECO:0000305" key="5"/>
<gene>
    <name type="primary">hsd17b12b</name>
    <name type="ORF">zgc:73289</name>
</gene>
<protein>
    <recommendedName>
        <fullName evidence="5">Very-long-chain 3-oxoacyl-CoA reductase-B</fullName>
        <ecNumber evidence="2">1.1.1.330</ecNumber>
    </recommendedName>
    <alternativeName>
        <fullName evidence="2">17-beta-hydroxysteroid dehydrogenase 12-B</fullName>
        <shortName evidence="2">17-beta-HSD 12-B</shortName>
        <shortName>zf3.3</shortName>
        <shortName>zfHSD17B12B</shortName>
    </alternativeName>
    <alternativeName>
        <fullName evidence="2">3-ketoacyl-CoA reductase</fullName>
        <shortName evidence="2">KAR</shortName>
    </alternativeName>
    <alternativeName>
        <fullName evidence="2">Estradiol 17-beta-dehydrogenase 12-B</fullName>
        <ecNumber evidence="2">1.1.1.62</ecNumber>
    </alternativeName>
</protein>
<keyword id="KW-0256">Endoplasmic reticulum</keyword>
<keyword id="KW-0444">Lipid biosynthesis</keyword>
<keyword id="KW-0443">Lipid metabolism</keyword>
<keyword id="KW-0472">Membrane</keyword>
<keyword id="KW-0521">NADP</keyword>
<keyword id="KW-0560">Oxidoreductase</keyword>
<keyword id="KW-1185">Reference proteome</keyword>
<keyword id="KW-0752">Steroid biosynthesis</keyword>
<keyword id="KW-0812">Transmembrane</keyword>
<keyword id="KW-1133">Transmembrane helix</keyword>
<comment type="function">
    <text evidence="2">Catalyzes the second of the four reactions of the long-chain fatty acids elongation cycle. This endoplasmic reticulum-bound enzymatic process, allows the addition of two carbons to the chain of long- and very long-chain fatty acids/VLCFAs per cycle. This enzyme has a 3-ketoacyl-CoA reductase activity, reducing 3-ketoacyl-CoA to 3-hydroxyacyl-CoA, within each cycle of fatty acid elongation. Thereby, it may participate in the production of VLCFAs of different chain lengths that are involved in multiple biological processes as precursors of membrane lipids and lipid mediators. May also catalyze the transformation of estrone (E1) into estradiol (E2) and play a role in estrogen formation.</text>
</comment>
<comment type="catalytic activity">
    <reaction evidence="2">
        <text>a very-long-chain (3R)-3-hydroxyacyl-CoA + NADP(+) = a very-long-chain 3-oxoacyl-CoA + NADPH + H(+)</text>
        <dbReference type="Rhea" id="RHEA:48680"/>
        <dbReference type="ChEBI" id="CHEBI:15378"/>
        <dbReference type="ChEBI" id="CHEBI:57783"/>
        <dbReference type="ChEBI" id="CHEBI:58349"/>
        <dbReference type="ChEBI" id="CHEBI:85440"/>
        <dbReference type="ChEBI" id="CHEBI:90725"/>
        <dbReference type="EC" id="1.1.1.330"/>
    </reaction>
</comment>
<comment type="catalytic activity">
    <reaction evidence="2">
        <text>17beta-estradiol + NAD(+) = estrone + NADH + H(+)</text>
        <dbReference type="Rhea" id="RHEA:24612"/>
        <dbReference type="ChEBI" id="CHEBI:15378"/>
        <dbReference type="ChEBI" id="CHEBI:16469"/>
        <dbReference type="ChEBI" id="CHEBI:17263"/>
        <dbReference type="ChEBI" id="CHEBI:57540"/>
        <dbReference type="ChEBI" id="CHEBI:57945"/>
        <dbReference type="EC" id="1.1.1.62"/>
    </reaction>
</comment>
<comment type="catalytic activity">
    <reaction evidence="2">
        <text>17beta-estradiol + NADP(+) = estrone + NADPH + H(+)</text>
        <dbReference type="Rhea" id="RHEA:24616"/>
        <dbReference type="ChEBI" id="CHEBI:15378"/>
        <dbReference type="ChEBI" id="CHEBI:16469"/>
        <dbReference type="ChEBI" id="CHEBI:17263"/>
        <dbReference type="ChEBI" id="CHEBI:57783"/>
        <dbReference type="ChEBI" id="CHEBI:58349"/>
        <dbReference type="EC" id="1.1.1.62"/>
    </reaction>
</comment>
<comment type="pathway">
    <text evidence="2">Lipid metabolism; fatty acid biosynthesis.</text>
</comment>
<comment type="pathway">
    <text evidence="2">Steroid biosynthesis; estrogen biosynthesis.</text>
</comment>
<comment type="subcellular location">
    <subcellularLocation>
        <location evidence="2">Endoplasmic reticulum membrane</location>
        <topology evidence="2">Multi-pass membrane protein</topology>
    </subcellularLocation>
</comment>
<comment type="developmental stage">
    <text evidence="4">Expressed throughout development. Weakly or not expressed in some adult organs.</text>
</comment>
<comment type="similarity">
    <text evidence="5">Belongs to the short-chain dehydrogenases/reductases (SDR) family. 17-beta-HSD 3 subfamily.</text>
</comment>
<name>DH12B_DANRE</name>
<reference key="1">
    <citation type="journal article" date="2004" name="Mol. Cell. Endocrinol.">
        <title>Identification and characterization of 17 beta-hydroxysteroid dehydrogenases in the zebrafish, Danio rerio.</title>
        <authorList>
            <person name="Mindnich R."/>
            <person name="Deluca D."/>
            <person name="Adamski J."/>
        </authorList>
    </citation>
    <scope>NUCLEOTIDE SEQUENCE [MRNA]</scope>
    <scope>DEVELOPMENTAL STAGE</scope>
</reference>
<reference key="2">
    <citation type="submission" date="2003-10" db="EMBL/GenBank/DDBJ databases">
        <authorList>
            <consortium name="NIH - Zebrafish Gene Collection (ZGC) project"/>
        </authorList>
    </citation>
    <scope>NUCLEOTIDE SEQUENCE [LARGE SCALE MRNA]</scope>
    <source>
        <tissue>Eye</tissue>
    </source>
</reference>
<organism>
    <name type="scientific">Danio rerio</name>
    <name type="common">Zebrafish</name>
    <name type="synonym">Brachydanio rerio</name>
    <dbReference type="NCBI Taxonomy" id="7955"/>
    <lineage>
        <taxon>Eukaryota</taxon>
        <taxon>Metazoa</taxon>
        <taxon>Chordata</taxon>
        <taxon>Craniata</taxon>
        <taxon>Vertebrata</taxon>
        <taxon>Euteleostomi</taxon>
        <taxon>Actinopterygii</taxon>
        <taxon>Neopterygii</taxon>
        <taxon>Teleostei</taxon>
        <taxon>Ostariophysi</taxon>
        <taxon>Cypriniformes</taxon>
        <taxon>Danionidae</taxon>
        <taxon>Danioninae</taxon>
        <taxon>Danio</taxon>
    </lineage>
</organism>
<sequence length="311" mass="34279">MEPFADALFWVGAVTVLWLSVSSLWSLINGIRVWILGNGNLMRASSLGKWAVVTGATDGIGKAYAEELARRGFAIVLISRTQEKLDEVSKAIESKYKVETKTISADFGSVDIYPKIESGLAGLEIGVLVNNVGVSYSYPEFFLNIPDVDSFINNMININIMSVCQMTRLVLPRMVDRSKGVILNVASASGMYPVPLLTLYSSTKAFVDFFSRGLDAEYKSKGIIIQSVLPFYVTTKLSKIRKPTLDIPTPERYVKAQLSTIGLQTQSNGYLPHAIMGWVTASLLPAKLLNKYVMGMGLSQRARYLKKQKQG</sequence>
<dbReference type="EC" id="1.1.1.330" evidence="2"/>
<dbReference type="EC" id="1.1.1.62" evidence="2"/>
<dbReference type="EMBL" id="AY551080">
    <property type="protein sequence ID" value="AAS58450.1"/>
    <property type="molecule type" value="mRNA"/>
</dbReference>
<dbReference type="EMBL" id="BC059617">
    <property type="protein sequence ID" value="AAH59617.1"/>
    <property type="molecule type" value="mRNA"/>
</dbReference>
<dbReference type="RefSeq" id="NP_955907.1">
    <property type="nucleotide sequence ID" value="NM_199613.1"/>
</dbReference>
<dbReference type="SMR" id="Q6QA33"/>
<dbReference type="FunCoup" id="Q6QA33">
    <property type="interactions" value="1555"/>
</dbReference>
<dbReference type="STRING" id="7955.ENSDARP00000089612"/>
<dbReference type="PaxDb" id="7955-ENSDARP00000089612"/>
<dbReference type="Ensembl" id="ENSDART00000098842">
    <property type="protein sequence ID" value="ENSDARP00000089612"/>
    <property type="gene ID" value="ENSDARG00000035872"/>
</dbReference>
<dbReference type="GeneID" id="322626"/>
<dbReference type="KEGG" id="dre:322626"/>
<dbReference type="AGR" id="ZFIN:ZDB-GENE-030131-1346"/>
<dbReference type="CTD" id="322626"/>
<dbReference type="ZFIN" id="ZDB-GENE-030131-1346">
    <property type="gene designation" value="hsd17b12b"/>
</dbReference>
<dbReference type="eggNOG" id="KOG1014">
    <property type="taxonomic scope" value="Eukaryota"/>
</dbReference>
<dbReference type="HOGENOM" id="CLU_010194_38_0_1"/>
<dbReference type="InParanoid" id="Q6QA33"/>
<dbReference type="OMA" id="HAVINQM"/>
<dbReference type="OrthoDB" id="5545019at2759"/>
<dbReference type="PhylomeDB" id="Q6QA33"/>
<dbReference type="TreeFam" id="TF314591"/>
<dbReference type="UniPathway" id="UPA00094"/>
<dbReference type="UniPathway" id="UPA00769"/>
<dbReference type="PRO" id="PR:Q6QA33"/>
<dbReference type="Proteomes" id="UP000000437">
    <property type="component" value="Chromosome 7"/>
</dbReference>
<dbReference type="Bgee" id="ENSDARG00000035872">
    <property type="expression patterns" value="Expressed in liver and 26 other cell types or tissues"/>
</dbReference>
<dbReference type="ExpressionAtlas" id="Q6QA33">
    <property type="expression patterns" value="baseline"/>
</dbReference>
<dbReference type="GO" id="GO:0005783">
    <property type="term" value="C:endoplasmic reticulum"/>
    <property type="evidence" value="ECO:0000318"/>
    <property type="project" value="GO_Central"/>
</dbReference>
<dbReference type="GO" id="GO:0005789">
    <property type="term" value="C:endoplasmic reticulum membrane"/>
    <property type="evidence" value="ECO:0007669"/>
    <property type="project" value="UniProtKB-SubCell"/>
</dbReference>
<dbReference type="GO" id="GO:0004303">
    <property type="term" value="F:estradiol 17-beta-dehydrogenase [NAD(P)+] activity"/>
    <property type="evidence" value="ECO:0007669"/>
    <property type="project" value="UniProtKB-EC"/>
</dbReference>
<dbReference type="GO" id="GO:0016491">
    <property type="term" value="F:oxidoreductase activity"/>
    <property type="evidence" value="ECO:0000318"/>
    <property type="project" value="GO_Central"/>
</dbReference>
<dbReference type="GO" id="GO:0141040">
    <property type="term" value="F:very-long-chain 3-oxoacyl-CoA reductase activity"/>
    <property type="evidence" value="ECO:0007669"/>
    <property type="project" value="UniProtKB-EC"/>
</dbReference>
<dbReference type="GO" id="GO:0006703">
    <property type="term" value="P:estrogen biosynthetic process"/>
    <property type="evidence" value="ECO:0007669"/>
    <property type="project" value="UniProtKB-UniPathway"/>
</dbReference>
<dbReference type="GO" id="GO:0006633">
    <property type="term" value="P:fatty acid biosynthetic process"/>
    <property type="evidence" value="ECO:0007669"/>
    <property type="project" value="UniProtKB-UniPathway"/>
</dbReference>
<dbReference type="CDD" id="cd05356">
    <property type="entry name" value="17beta-HSD1_like_SDR_c"/>
    <property type="match status" value="1"/>
</dbReference>
<dbReference type="FunFam" id="3.40.50.720:FF:000137">
    <property type="entry name" value="Hydroxysteroid (17-beta) dehydrogenase 3"/>
    <property type="match status" value="1"/>
</dbReference>
<dbReference type="Gene3D" id="3.40.50.720">
    <property type="entry name" value="NAD(P)-binding Rossmann-like Domain"/>
    <property type="match status" value="1"/>
</dbReference>
<dbReference type="InterPro" id="IPR036291">
    <property type="entry name" value="NAD(P)-bd_dom_sf"/>
</dbReference>
<dbReference type="InterPro" id="IPR002347">
    <property type="entry name" value="SDR_fam"/>
</dbReference>
<dbReference type="InterPro" id="IPR051019">
    <property type="entry name" value="VLCFA-Steroid_DH"/>
</dbReference>
<dbReference type="PANTHER" id="PTHR43899">
    <property type="entry name" value="RH59310P"/>
    <property type="match status" value="1"/>
</dbReference>
<dbReference type="PANTHER" id="PTHR43899:SF18">
    <property type="entry name" value="VERY-LONG-CHAIN 3-OXOACYL-COA REDUCTASE-B"/>
    <property type="match status" value="1"/>
</dbReference>
<dbReference type="Pfam" id="PF00106">
    <property type="entry name" value="adh_short"/>
    <property type="match status" value="1"/>
</dbReference>
<dbReference type="PIRSF" id="PIRSF000126">
    <property type="entry name" value="11-beta-HSD1"/>
    <property type="match status" value="1"/>
</dbReference>
<dbReference type="PRINTS" id="PR00081">
    <property type="entry name" value="GDHRDH"/>
</dbReference>
<dbReference type="PRINTS" id="PR00080">
    <property type="entry name" value="SDRFAMILY"/>
</dbReference>
<dbReference type="SUPFAM" id="SSF51735">
    <property type="entry name" value="NAD(P)-binding Rossmann-fold domains"/>
    <property type="match status" value="1"/>
</dbReference>
<accession>Q6QA33</accession>
<accession>Q6PBR0</accession>
<proteinExistence type="evidence at transcript level"/>